<organism>
    <name type="scientific">Prochlorococcus marinus (strain MIT 9515)</name>
    <dbReference type="NCBI Taxonomy" id="167542"/>
    <lineage>
        <taxon>Bacteria</taxon>
        <taxon>Bacillati</taxon>
        <taxon>Cyanobacteriota</taxon>
        <taxon>Cyanophyceae</taxon>
        <taxon>Synechococcales</taxon>
        <taxon>Prochlorococcaceae</taxon>
        <taxon>Prochlorococcus</taxon>
    </lineage>
</organism>
<reference key="1">
    <citation type="journal article" date="2007" name="PLoS Genet.">
        <title>Patterns and implications of gene gain and loss in the evolution of Prochlorococcus.</title>
        <authorList>
            <person name="Kettler G.C."/>
            <person name="Martiny A.C."/>
            <person name="Huang K."/>
            <person name="Zucker J."/>
            <person name="Coleman M.L."/>
            <person name="Rodrigue S."/>
            <person name="Chen F."/>
            <person name="Lapidus A."/>
            <person name="Ferriera S."/>
            <person name="Johnson J."/>
            <person name="Steglich C."/>
            <person name="Church G.M."/>
            <person name="Richardson P."/>
            <person name="Chisholm S.W."/>
        </authorList>
    </citation>
    <scope>NUCLEOTIDE SEQUENCE [LARGE SCALE GENOMIC DNA]</scope>
    <source>
        <strain>MIT 9515</strain>
    </source>
</reference>
<sequence length="103" mass="10819">MAAVSLTVSTVKPLGDRIFIKVSESEEKTAGGILLPDSAKEKPQVGEVAQVGPGKLNDDGSRQTPEVSIGDKVLYSKYAGTDIKLGGDEYVLLSEKDILAVVS</sequence>
<feature type="chain" id="PRO_1000025327" description="Co-chaperonin GroES">
    <location>
        <begin position="1"/>
        <end position="103"/>
    </location>
</feature>
<name>CH10_PROM5</name>
<evidence type="ECO:0000255" key="1">
    <source>
        <dbReference type="HAMAP-Rule" id="MF_00580"/>
    </source>
</evidence>
<accession>A2BYG2</accession>
<protein>
    <recommendedName>
        <fullName evidence="1">Co-chaperonin GroES</fullName>
    </recommendedName>
    <alternativeName>
        <fullName evidence="1">10 kDa chaperonin</fullName>
    </alternativeName>
    <alternativeName>
        <fullName evidence="1">Chaperonin-10</fullName>
        <shortName evidence="1">Cpn10</shortName>
    </alternativeName>
</protein>
<keyword id="KW-0143">Chaperone</keyword>
<keyword id="KW-0963">Cytoplasm</keyword>
<gene>
    <name evidence="1" type="primary">groES</name>
    <name evidence="1" type="synonym">groS</name>
    <name type="ordered locus">P9515_16161</name>
</gene>
<proteinExistence type="inferred from homology"/>
<dbReference type="EMBL" id="CP000552">
    <property type="protein sequence ID" value="ABM72823.1"/>
    <property type="molecule type" value="Genomic_DNA"/>
</dbReference>
<dbReference type="RefSeq" id="WP_011820918.1">
    <property type="nucleotide sequence ID" value="NC_008817.1"/>
</dbReference>
<dbReference type="SMR" id="A2BYG2"/>
<dbReference type="STRING" id="167542.P9515_16161"/>
<dbReference type="GeneID" id="60201227"/>
<dbReference type="KEGG" id="pmc:P9515_16161"/>
<dbReference type="eggNOG" id="COG0234">
    <property type="taxonomic scope" value="Bacteria"/>
</dbReference>
<dbReference type="HOGENOM" id="CLU_132825_2_1_3"/>
<dbReference type="OrthoDB" id="9806791at2"/>
<dbReference type="Proteomes" id="UP000001589">
    <property type="component" value="Chromosome"/>
</dbReference>
<dbReference type="GO" id="GO:0005737">
    <property type="term" value="C:cytoplasm"/>
    <property type="evidence" value="ECO:0007669"/>
    <property type="project" value="UniProtKB-SubCell"/>
</dbReference>
<dbReference type="GO" id="GO:0005524">
    <property type="term" value="F:ATP binding"/>
    <property type="evidence" value="ECO:0007669"/>
    <property type="project" value="InterPro"/>
</dbReference>
<dbReference type="GO" id="GO:0046872">
    <property type="term" value="F:metal ion binding"/>
    <property type="evidence" value="ECO:0007669"/>
    <property type="project" value="TreeGrafter"/>
</dbReference>
<dbReference type="GO" id="GO:0044183">
    <property type="term" value="F:protein folding chaperone"/>
    <property type="evidence" value="ECO:0007669"/>
    <property type="project" value="InterPro"/>
</dbReference>
<dbReference type="GO" id="GO:0051087">
    <property type="term" value="F:protein-folding chaperone binding"/>
    <property type="evidence" value="ECO:0007669"/>
    <property type="project" value="TreeGrafter"/>
</dbReference>
<dbReference type="GO" id="GO:0051082">
    <property type="term" value="F:unfolded protein binding"/>
    <property type="evidence" value="ECO:0007669"/>
    <property type="project" value="TreeGrafter"/>
</dbReference>
<dbReference type="GO" id="GO:0051085">
    <property type="term" value="P:chaperone cofactor-dependent protein refolding"/>
    <property type="evidence" value="ECO:0007669"/>
    <property type="project" value="TreeGrafter"/>
</dbReference>
<dbReference type="CDD" id="cd00320">
    <property type="entry name" value="cpn10"/>
    <property type="match status" value="1"/>
</dbReference>
<dbReference type="FunFam" id="2.30.33.40:FF:000001">
    <property type="entry name" value="10 kDa chaperonin"/>
    <property type="match status" value="1"/>
</dbReference>
<dbReference type="Gene3D" id="2.30.33.40">
    <property type="entry name" value="GroES chaperonin"/>
    <property type="match status" value="1"/>
</dbReference>
<dbReference type="HAMAP" id="MF_00580">
    <property type="entry name" value="CH10"/>
    <property type="match status" value="1"/>
</dbReference>
<dbReference type="InterPro" id="IPR020818">
    <property type="entry name" value="Chaperonin_GroES"/>
</dbReference>
<dbReference type="InterPro" id="IPR037124">
    <property type="entry name" value="Chaperonin_GroES_sf"/>
</dbReference>
<dbReference type="InterPro" id="IPR018369">
    <property type="entry name" value="Chaprnonin_Cpn10_CS"/>
</dbReference>
<dbReference type="InterPro" id="IPR011032">
    <property type="entry name" value="GroES-like_sf"/>
</dbReference>
<dbReference type="NCBIfam" id="NF001530">
    <property type="entry name" value="PRK00364.1-6"/>
    <property type="match status" value="1"/>
</dbReference>
<dbReference type="NCBIfam" id="NF001531">
    <property type="entry name" value="PRK00364.2-2"/>
    <property type="match status" value="1"/>
</dbReference>
<dbReference type="NCBIfam" id="NF001533">
    <property type="entry name" value="PRK00364.2-4"/>
    <property type="match status" value="1"/>
</dbReference>
<dbReference type="NCBIfam" id="NF001534">
    <property type="entry name" value="PRK00364.2-5"/>
    <property type="match status" value="1"/>
</dbReference>
<dbReference type="PANTHER" id="PTHR10772">
    <property type="entry name" value="10 KDA HEAT SHOCK PROTEIN"/>
    <property type="match status" value="1"/>
</dbReference>
<dbReference type="PANTHER" id="PTHR10772:SF58">
    <property type="entry name" value="CO-CHAPERONIN GROES"/>
    <property type="match status" value="1"/>
</dbReference>
<dbReference type="Pfam" id="PF00166">
    <property type="entry name" value="Cpn10"/>
    <property type="match status" value="1"/>
</dbReference>
<dbReference type="PRINTS" id="PR00297">
    <property type="entry name" value="CHAPERONIN10"/>
</dbReference>
<dbReference type="SMART" id="SM00883">
    <property type="entry name" value="Cpn10"/>
    <property type="match status" value="1"/>
</dbReference>
<dbReference type="SUPFAM" id="SSF50129">
    <property type="entry name" value="GroES-like"/>
    <property type="match status" value="1"/>
</dbReference>
<dbReference type="PROSITE" id="PS00681">
    <property type="entry name" value="CHAPERONINS_CPN10"/>
    <property type="match status" value="1"/>
</dbReference>
<comment type="function">
    <text evidence="1">Together with the chaperonin GroEL, plays an essential role in assisting protein folding. The GroEL-GroES system forms a nano-cage that allows encapsulation of the non-native substrate proteins and provides a physical environment optimized to promote and accelerate protein folding. GroES binds to the apical surface of the GroEL ring, thereby capping the opening of the GroEL channel.</text>
</comment>
<comment type="subunit">
    <text evidence="1">Heptamer of 7 subunits arranged in a ring. Interacts with the chaperonin GroEL.</text>
</comment>
<comment type="subcellular location">
    <subcellularLocation>
        <location evidence="1">Cytoplasm</location>
    </subcellularLocation>
</comment>
<comment type="similarity">
    <text evidence="1">Belongs to the GroES chaperonin family.</text>
</comment>